<accession>P32870</accession>
<accession>Q9TWA7</accession>
<accession>Q9VY17</accession>
<evidence type="ECO:0000250" key="1"/>
<evidence type="ECO:0000255" key="2"/>
<evidence type="ECO:0000255" key="3">
    <source>
        <dbReference type="PROSITE-ProRule" id="PRU00099"/>
    </source>
</evidence>
<evidence type="ECO:0000256" key="4">
    <source>
        <dbReference type="SAM" id="MobiDB-lite"/>
    </source>
</evidence>
<evidence type="ECO:0000269" key="5">
    <source>
    </source>
</evidence>
<evidence type="ECO:0000305" key="6"/>
<evidence type="ECO:0000312" key="7">
    <source>
        <dbReference type="FlyBase" id="FBgn0003301"/>
    </source>
</evidence>
<organism>
    <name type="scientific">Drosophila melanogaster</name>
    <name type="common">Fruit fly</name>
    <dbReference type="NCBI Taxonomy" id="7227"/>
    <lineage>
        <taxon>Eukaryota</taxon>
        <taxon>Metazoa</taxon>
        <taxon>Ecdysozoa</taxon>
        <taxon>Arthropoda</taxon>
        <taxon>Hexapoda</taxon>
        <taxon>Insecta</taxon>
        <taxon>Pterygota</taxon>
        <taxon>Neoptera</taxon>
        <taxon>Endopterygota</taxon>
        <taxon>Diptera</taxon>
        <taxon>Brachycera</taxon>
        <taxon>Muscomorpha</taxon>
        <taxon>Ephydroidea</taxon>
        <taxon>Drosophilidae</taxon>
        <taxon>Drosophila</taxon>
        <taxon>Sophophora</taxon>
    </lineage>
</organism>
<name>CYA1_DROME</name>
<sequence length="2248" mass="248824">MDHAVKATRGRPLNTLRFENDELECLYQRYTLKLQRFSVLGVVALVFVLCGVMAALSLTFNNAATFHNIFNAIVCGLFAVVLVLLQCSVIKDHHLPTLCYGILLFTASICVVSMPTLGSVFPVDTKEVMAEGVWQIVFVVFLAYAMMPLQIWEAVAFGIALPSVHISLTVYKIFTDALRYLEYNQLIANIVIFIGVNVAGLVVNIMMERAQRRTFLDTRNCIASRLEIQDENEKLERLLLSVLPQHVAMQMKNDILSPVAGQFHRIYIQKHENVSILFADIVGFTVLSSQCSAQELVRLLNELFGRFDQLAHDNHCLRIKILGDCYYCVSGLPEPRKDHAKCAVEMGLDMIDAIATVVEATDVILNMRVGIHTGRVLCGVLGLRKWQFDVWSNDVTLANHMESGGEPGRVHVTRATLDSLSGEYEVEAGHGDERSSYLRDHGVDTFFIVPPPHRRKPLMLNTLGVRSAIGSRRKLSFRNVSNVVMQLLHTIKFSEPVPFSNIATGSFPSAASALGGGVSVGGGGGGGGGGVARGSTCEANSGNVQVSEKGSRKVIRLQKILHATPPPHGMGYGSVVGSGGGVDSGISGGGGCVSGGIAGGGGVQVTVGTNPNSTASTISRIHRHNHKNNKSQSKVADKFKRPFRKRHSVAAHHQPTNRVNRFLSQAINARSVDCDKSEHVDRLTLRFRQSDMEREYHKDFDLGFTTAMGCSLLLLILGAALQVTALPRTLILLLLFLFAFIWVSAILMLLLAVRLKWIIWDISESFSLRMAITIFTVILIYSVGQVNVFTCVSDHPCSGNGTTSFQNDSHRKCSLPQYVSLSAAFAFLSVSVFLRLPIIFKSLLVLGMGTIYGLFIELSHQNIFECYDNRVNASIPLHLISLARIAIFMIAILVHGRLVEGTARLDFLWQLQASQEKKEMDVLQESNKRILHNLLPAHVAAHFLDAQFRNNMELYHQSYAKVGVIFASVPNFNEFYTEMDGSDQGLECLRLLNEIIADFDELLKEDRFRGIDKIKTVGSTYMAVVGLIPEYKIQPNDPNSVRRHMTALIEYVKAMRHSLQEINSHSYNNFMLRVGINIGPVVAGVIGARKPQYDIWGNTVNVASRMDSTGVPGYSQVTQEVVDSLVGSHFEFRCRGTIKVKGKGDMVTYFLCDSGNKSLNGEVRNAMSLPQSLHAPDYYMKVSQFPENRVNTDTYSKKENGHLYAGNGVEEQQLLLQHQHKQHDPLPLPAPPPPVHHHLHQQQQQRLNSKLQKQPIFMANGGLPNIRENGNGHNGEHQQQQQQQQQHQQQQQQQQQHGGFMVATTTPPAAVAVPLQPQHHQLQFQHPHQHPLPSAVSVPVQHQILLHHQLQLQHQPVPSVMLREFNIIENPTSGGRHQQMEQLPPHHGSLDLSGMGMGVGAGVLGSDCFMMPRRDRERTYVPPLNQHGHHPPHHLHSNLNLNQSQHPPSFTSLGYGQCRESEPLLHASSVAPVAKIMPMQHAPKYEPPRYTSPHTMLSQQHQQQQQQQHQHQQPQSQSAQDQQTHPAQDPHPLQRQYAMYSQQPQLPPKPVLRTYMKPLPKLPTDLEESRDMSSTDDLSSRPHSPSMSSSDESYSKTTEGEGEGDEDSPRMVNGGHLHHRNGYHLPAGGLVNPLQWLYPCDIQVDPTSPVVDMAHLHDFELSSTTESQGHHTNSNTTSNTQHKGDSCNSFDFQKAAVGTAAGAAIATKSPFERELQRLLNESSRARCLATATTTAGAISTTDQTASNGSRELSYSLSNGKLSSANGHGVGGSGSGSGSGSGSGSAVGNGSGGSGSSNGNLSGGSGSNSNSGNNNSSHHKTEQQQNMDHEHLAGGKLLGSNSFMIAKHPVGLEAIKEITRNKNPSESSQMQTSDTESCEILHENRNQMHVLAMLEMHTAKELNGSHAHHGQHHQQPQRTHRQRPRSKELQYSHESLDGLDGAVQSQSQQRHQRYHHHHHHQQRQQQQQRYNHVQEQEERDDTEDNLADEEFEDDEVGRDVRQKRLQKSELNHKRSEVATEAGNHHDDEVEEEDDDDDEEEDHRNGGREAAPLTNGSMRGLEANVINDELKYGATHLNHQSMDSNPLESQSEWSDDDCREEATGGAESTGYITDEPGLENISLLNEAGLTDAEGALSDVNSLYNAPDVDDTSVSSRASSRLLSLDSLSGLYDCDLDSKHELAIVNASHKISSKFGQPLSPAQQQHQQQQQQQQQQQQQHHQQQLQQNPQHTQAQSHLAPVQFQSAEELRE</sequence>
<protein>
    <recommendedName>
        <fullName evidence="7">Adenylate cyclase 1</fullName>
        <ecNumber evidence="5">4.6.1.1</ecNumber>
    </recommendedName>
    <alternativeName>
        <fullName>ATP pyrophosphate-lyase</fullName>
    </alternativeName>
    <alternativeName>
        <fullName>Ca(2+)/calmodulin-responsive adenylate cyclase</fullName>
    </alternativeName>
    <alternativeName>
        <fullName>Protein rutabaga</fullName>
    </alternativeName>
</protein>
<comment type="function">
    <text evidence="5">This is a membrane-bound, calmodulin-sensitive adenylyl cyclase. Inactivation of this cyclase leads to a learning and memory defect.</text>
</comment>
<comment type="catalytic activity">
    <reaction evidence="5">
        <text>ATP = 3',5'-cyclic AMP + diphosphate</text>
        <dbReference type="Rhea" id="RHEA:15389"/>
        <dbReference type="ChEBI" id="CHEBI:30616"/>
        <dbReference type="ChEBI" id="CHEBI:33019"/>
        <dbReference type="ChEBI" id="CHEBI:58165"/>
        <dbReference type="EC" id="4.6.1.1"/>
    </reaction>
</comment>
<comment type="cofactor">
    <cofactor evidence="1">
        <name>Mg(2+)</name>
        <dbReference type="ChEBI" id="CHEBI:18420"/>
    </cofactor>
    <text evidence="1">Binds 2 magnesium ions per subunit.</text>
</comment>
<comment type="activity regulation">
    <text>Activated by calcium/calmodulin and G protein.</text>
</comment>
<comment type="subcellular location">
    <subcellularLocation>
        <location>Membrane</location>
        <topology>Multi-pass membrane protein</topology>
    </subcellularLocation>
</comment>
<comment type="tissue specificity">
    <text>Mushroom bodies of the fly brain.</text>
</comment>
<comment type="similarity">
    <text evidence="3">Belongs to the adenylyl cyclase class-4/guanylyl cyclase family.</text>
</comment>
<proteinExistence type="evidence at protein level"/>
<keyword id="KW-0067">ATP-binding</keyword>
<keyword id="KW-0112">Calmodulin-binding</keyword>
<keyword id="KW-0115">cAMP biosynthesis</keyword>
<keyword id="KW-0325">Glycoprotein</keyword>
<keyword id="KW-0456">Lyase</keyword>
<keyword id="KW-0460">Magnesium</keyword>
<keyword id="KW-0472">Membrane</keyword>
<keyword id="KW-0479">Metal-binding</keyword>
<keyword id="KW-0547">Nucleotide-binding</keyword>
<keyword id="KW-1185">Reference proteome</keyword>
<keyword id="KW-0677">Repeat</keyword>
<keyword id="KW-0812">Transmembrane</keyword>
<keyword id="KW-1133">Transmembrane helix</keyword>
<feature type="chain" id="PRO_0000195716" description="Adenylate cyclase 1">
    <location>
        <begin position="1"/>
        <end position="2248"/>
    </location>
</feature>
<feature type="topological domain" description="Cytoplasmic" evidence="2">
    <location>
        <begin position="1"/>
        <end position="41"/>
    </location>
</feature>
<feature type="transmembrane region" description="Helical" evidence="2">
    <location>
        <begin position="42"/>
        <end position="60"/>
    </location>
</feature>
<feature type="transmembrane region" description="Helical" evidence="2">
    <location>
        <begin position="65"/>
        <end position="84"/>
    </location>
</feature>
<feature type="transmembrane region" description="Helical" evidence="2">
    <location>
        <begin position="101"/>
        <end position="115"/>
    </location>
</feature>
<feature type="transmembrane region" description="Helical" evidence="2">
    <location>
        <begin position="122"/>
        <end position="142"/>
    </location>
</feature>
<feature type="transmembrane region" description="Helical" evidence="2">
    <location>
        <begin position="152"/>
        <end position="174"/>
    </location>
</feature>
<feature type="transmembrane region" description="Helical" evidence="2">
    <location>
        <begin position="186"/>
        <end position="206"/>
    </location>
</feature>
<feature type="topological domain" description="Cytoplasmic" evidence="2">
    <location>
        <begin position="207"/>
        <end position="705"/>
    </location>
</feature>
<feature type="transmembrane region" description="Helical" evidence="2">
    <location>
        <begin position="706"/>
        <end position="726"/>
    </location>
</feature>
<feature type="transmembrane region" description="Helical" evidence="2">
    <location>
        <begin position="730"/>
        <end position="750"/>
    </location>
</feature>
<feature type="transmembrane region" description="Helical" evidence="2">
    <location>
        <begin position="770"/>
        <end position="791"/>
    </location>
</feature>
<feature type="topological domain" description="Extracellular" evidence="2">
    <location>
        <begin position="792"/>
        <end position="813"/>
    </location>
</feature>
<feature type="transmembrane region" description="Helical" evidence="2">
    <location>
        <begin position="814"/>
        <end position="834"/>
    </location>
</feature>
<feature type="transmembrane region" description="Helical" evidence="2">
    <location>
        <begin position="842"/>
        <end position="867"/>
    </location>
</feature>
<feature type="transmembrane region" description="Helical" evidence="2">
    <location>
        <begin position="868"/>
        <end position="888"/>
    </location>
</feature>
<feature type="topological domain" description="Cytoplasmic" evidence="2">
    <location>
        <begin position="889"/>
        <end position="2248"/>
    </location>
</feature>
<feature type="domain" description="Guanylate cyclase 1" evidence="3">
    <location>
        <begin position="275"/>
        <end position="402"/>
    </location>
</feature>
<feature type="domain" description="Guanylate cyclase 2" evidence="3">
    <location>
        <begin position="963"/>
        <end position="1107"/>
    </location>
</feature>
<feature type="region of interest" description="Disordered" evidence="4">
    <location>
        <begin position="1217"/>
        <end position="1299"/>
    </location>
</feature>
<feature type="region of interest" description="Disordered" evidence="4">
    <location>
        <begin position="1420"/>
        <end position="1448"/>
    </location>
</feature>
<feature type="region of interest" description="Disordered" evidence="4">
    <location>
        <begin position="1483"/>
        <end position="1530"/>
    </location>
</feature>
<feature type="region of interest" description="Disordered" evidence="4">
    <location>
        <begin position="1561"/>
        <end position="1617"/>
    </location>
</feature>
<feature type="region of interest" description="Disordered" evidence="4">
    <location>
        <begin position="1663"/>
        <end position="1685"/>
    </location>
</feature>
<feature type="region of interest" description="Disordered" evidence="4">
    <location>
        <begin position="1739"/>
        <end position="1826"/>
    </location>
</feature>
<feature type="region of interest" description="Disordered" evidence="4">
    <location>
        <begin position="1902"/>
        <end position="2057"/>
    </location>
</feature>
<feature type="region of interest" description="Disordered" evidence="4">
    <location>
        <begin position="2077"/>
        <end position="2112"/>
    </location>
</feature>
<feature type="region of interest" description="Disordered" evidence="4">
    <location>
        <begin position="2190"/>
        <end position="2248"/>
    </location>
</feature>
<feature type="compositionally biased region" description="Low complexity" evidence="4">
    <location>
        <begin position="1241"/>
        <end position="1252"/>
    </location>
</feature>
<feature type="compositionally biased region" description="Low complexity" evidence="4">
    <location>
        <begin position="1277"/>
        <end position="1299"/>
    </location>
</feature>
<feature type="compositionally biased region" description="Basic residues" evidence="4">
    <location>
        <begin position="1427"/>
        <end position="1436"/>
    </location>
</feature>
<feature type="compositionally biased region" description="Low complexity" evidence="4">
    <location>
        <begin position="1437"/>
        <end position="1446"/>
    </location>
</feature>
<feature type="compositionally biased region" description="Low complexity" evidence="4">
    <location>
        <begin position="1498"/>
        <end position="1523"/>
    </location>
</feature>
<feature type="compositionally biased region" description="Low complexity" evidence="4">
    <location>
        <begin position="1581"/>
        <end position="1592"/>
    </location>
</feature>
<feature type="compositionally biased region" description="Low complexity" evidence="4">
    <location>
        <begin position="1670"/>
        <end position="1681"/>
    </location>
</feature>
<feature type="compositionally biased region" description="Polar residues" evidence="4">
    <location>
        <begin position="1745"/>
        <end position="1761"/>
    </location>
</feature>
<feature type="compositionally biased region" description="Gly residues" evidence="4">
    <location>
        <begin position="1767"/>
        <end position="1805"/>
    </location>
</feature>
<feature type="compositionally biased region" description="Low complexity" evidence="4">
    <location>
        <begin position="1806"/>
        <end position="1815"/>
    </location>
</feature>
<feature type="compositionally biased region" description="Basic and acidic residues" evidence="4">
    <location>
        <begin position="1924"/>
        <end position="1935"/>
    </location>
</feature>
<feature type="compositionally biased region" description="Basic residues" evidence="4">
    <location>
        <begin position="1949"/>
        <end position="1961"/>
    </location>
</feature>
<feature type="compositionally biased region" description="Acidic residues" evidence="4">
    <location>
        <begin position="1976"/>
        <end position="1995"/>
    </location>
</feature>
<feature type="compositionally biased region" description="Basic and acidic residues" evidence="4">
    <location>
        <begin position="1996"/>
        <end position="2026"/>
    </location>
</feature>
<feature type="compositionally biased region" description="Acidic residues" evidence="4">
    <location>
        <begin position="2027"/>
        <end position="2039"/>
    </location>
</feature>
<feature type="compositionally biased region" description="Polar residues" evidence="4">
    <location>
        <begin position="2077"/>
        <end position="2090"/>
    </location>
</feature>
<feature type="compositionally biased region" description="Low complexity" evidence="4">
    <location>
        <begin position="2200"/>
        <end position="2232"/>
    </location>
</feature>
<feature type="binding site" evidence="3">
    <location>
        <position position="280"/>
    </location>
    <ligand>
        <name>Mg(2+)</name>
        <dbReference type="ChEBI" id="CHEBI:18420"/>
        <label>1</label>
    </ligand>
</feature>
<feature type="binding site" evidence="3">
    <location>
        <position position="280"/>
    </location>
    <ligand>
        <name>Mg(2+)</name>
        <dbReference type="ChEBI" id="CHEBI:18420"/>
        <label>2</label>
    </ligand>
</feature>
<feature type="binding site" evidence="3">
    <location>
        <position position="281"/>
    </location>
    <ligand>
        <name>Mg(2+)</name>
        <dbReference type="ChEBI" id="CHEBI:18420"/>
        <label>2</label>
    </ligand>
</feature>
<feature type="binding site" evidence="3">
    <location>
        <position position="324"/>
    </location>
    <ligand>
        <name>Mg(2+)</name>
        <dbReference type="ChEBI" id="CHEBI:18420"/>
        <label>1</label>
    </ligand>
</feature>
<feature type="binding site" evidence="3">
    <location>
        <position position="324"/>
    </location>
    <ligand>
        <name>Mg(2+)</name>
        <dbReference type="ChEBI" id="CHEBI:18420"/>
        <label>2</label>
    </ligand>
</feature>
<feature type="glycosylation site" description="N-linked (GlcNAc...) asparagine" evidence="2">
    <location>
        <position position="800"/>
    </location>
</feature>
<feature type="glycosylation site" description="N-linked (GlcNAc...) asparagine" evidence="2">
    <location>
        <position position="807"/>
    </location>
</feature>
<feature type="mutagenesis site" description="Abolishes catalytic activity." evidence="5">
    <original>G</original>
    <variation>R</variation>
    <location>
        <position position="1026"/>
    </location>
</feature>
<feature type="sequence conflict" description="In Ref. 1; AAA28844." evidence="6" ref="1">
    <original>A</original>
    <variation>V</variation>
    <location>
        <position position="64"/>
    </location>
</feature>
<feature type="sequence conflict" description="In Ref. 1; AAA28844." evidence="6" ref="1">
    <original>G</original>
    <variation>S</variation>
    <location>
        <position position="596"/>
    </location>
</feature>
<feature type="sequence conflict" description="In Ref. 1; AAA28844." evidence="6" ref="1">
    <original>QH</original>
    <variation>HQ</variation>
    <location>
        <begin position="1286"/>
        <end position="1287"/>
    </location>
</feature>
<feature type="sequence conflict" description="In Ref. 1; AAA28844." evidence="6" ref="1">
    <original>Q</original>
    <variation>QH</variation>
    <location>
        <position position="1291"/>
    </location>
</feature>
<feature type="sequence conflict" description="In Ref. 1; AAA28844." evidence="6" ref="1">
    <original>S</original>
    <variation>G</variation>
    <location>
        <position position="1406"/>
    </location>
</feature>
<feature type="sequence conflict" description="In Ref. 1; AAA28844." evidence="6" ref="1">
    <original>Q</original>
    <variation>H</variation>
    <location>
        <position position="1507"/>
    </location>
</feature>
<feature type="sequence conflict" description="In Ref. 1; AAA28844." evidence="6" ref="1">
    <original>HQQP</original>
    <variation>QPQS</variation>
    <location>
        <begin position="1511"/>
        <end position="1514"/>
    </location>
</feature>
<feature type="sequence conflict" description="In Ref. 1; AAA28844." evidence="6" ref="1">
    <original>H</original>
    <variation>Q</variation>
    <location>
        <position position="1682"/>
    </location>
</feature>
<feature type="sequence conflict" description="In Ref. 1; AAA28844." evidence="6" ref="1">
    <original>A</original>
    <variation>T</variation>
    <location>
        <position position="1696"/>
    </location>
</feature>
<feature type="sequence conflict" description="In Ref. 1; AAA28844." evidence="6" ref="1">
    <location>
        <begin position="1771"/>
        <end position="1772"/>
    </location>
</feature>
<feature type="sequence conflict" description="In Ref. 1; AAA28844." evidence="6" ref="1">
    <original>S</original>
    <variation>G</variation>
    <location>
        <position position="1801"/>
    </location>
</feature>
<feature type="sequence conflict" description="In Ref. 1; AAA28844." evidence="6" ref="1">
    <original>H</original>
    <variation>HH</variation>
    <location>
        <position position="1912"/>
    </location>
</feature>
<feature type="sequence conflict" description="In Ref. 1; AAA28844." evidence="6" ref="1">
    <original>H</original>
    <variation>N</variation>
    <location>
        <position position="1950"/>
    </location>
</feature>
<feature type="sequence conflict" description="In Ref. 1; AAA28844." evidence="6" ref="1">
    <original>H</original>
    <variation>Q</variation>
    <location>
        <position position="2218"/>
    </location>
</feature>
<dbReference type="EC" id="4.6.1.1" evidence="5"/>
<dbReference type="EMBL" id="M81887">
    <property type="protein sequence ID" value="AAA28844.1"/>
    <property type="molecule type" value="mRNA"/>
</dbReference>
<dbReference type="EMBL" id="AE014298">
    <property type="protein sequence ID" value="AAF48388.1"/>
    <property type="molecule type" value="Genomic_DNA"/>
</dbReference>
<dbReference type="PIR" id="C42088">
    <property type="entry name" value="C42088"/>
</dbReference>
<dbReference type="PIR" id="D42088">
    <property type="entry name" value="D42088"/>
</dbReference>
<dbReference type="RefSeq" id="NP_511156.2">
    <property type="nucleotide sequence ID" value="NM_078601.4"/>
</dbReference>
<dbReference type="SMR" id="P32870"/>
<dbReference type="BioGRID" id="58765">
    <property type="interactions" value="16"/>
</dbReference>
<dbReference type="FunCoup" id="P32870">
    <property type="interactions" value="291"/>
</dbReference>
<dbReference type="IntAct" id="P32870">
    <property type="interactions" value="6"/>
</dbReference>
<dbReference type="STRING" id="7227.FBpp0073809"/>
<dbReference type="GlyCosmos" id="P32870">
    <property type="glycosylation" value="2 sites, No reported glycans"/>
</dbReference>
<dbReference type="GlyGen" id="P32870">
    <property type="glycosylation" value="4 sites"/>
</dbReference>
<dbReference type="PaxDb" id="7227-FBpp0073809"/>
<dbReference type="EnsemblMetazoa" id="FBtr0073992">
    <property type="protein sequence ID" value="FBpp0073809"/>
    <property type="gene ID" value="FBgn0003301"/>
</dbReference>
<dbReference type="GeneID" id="32406"/>
<dbReference type="KEGG" id="dme:Dmel_CG9533"/>
<dbReference type="UCSC" id="CG9533-RA">
    <property type="organism name" value="d. melanogaster"/>
</dbReference>
<dbReference type="AGR" id="FB:FBgn0003301"/>
<dbReference type="CTD" id="32406"/>
<dbReference type="FlyBase" id="FBgn0003301">
    <property type="gene designation" value="Adcy1"/>
</dbReference>
<dbReference type="VEuPathDB" id="VectorBase:FBgn0003301"/>
<dbReference type="eggNOG" id="KOG3619">
    <property type="taxonomic scope" value="Eukaryota"/>
</dbReference>
<dbReference type="InParanoid" id="P32870"/>
<dbReference type="OMA" id="CEILHET"/>
<dbReference type="OrthoDB" id="6147412at2759"/>
<dbReference type="PhylomeDB" id="P32870"/>
<dbReference type="Reactome" id="R-DME-163615">
    <property type="pathway name" value="PKA activation"/>
</dbReference>
<dbReference type="Reactome" id="R-DME-170660">
    <property type="pathway name" value="Adenylate cyclase activating pathway"/>
</dbReference>
<dbReference type="Reactome" id="R-DME-170670">
    <property type="pathway name" value="Adenylate cyclase inhibitory pathway"/>
</dbReference>
<dbReference type="Reactome" id="R-DME-5610787">
    <property type="pathway name" value="Hedgehog 'off' state"/>
</dbReference>
<dbReference type="SignaLink" id="P32870"/>
<dbReference type="BioGRID-ORCS" id="32406">
    <property type="hits" value="0 hits in 3 CRISPR screens"/>
</dbReference>
<dbReference type="ChiTaRS" id="rut">
    <property type="organism name" value="fly"/>
</dbReference>
<dbReference type="GenomeRNAi" id="32406"/>
<dbReference type="PRO" id="PR:P32870"/>
<dbReference type="Proteomes" id="UP000000803">
    <property type="component" value="Chromosome X"/>
</dbReference>
<dbReference type="Bgee" id="FBgn0003301">
    <property type="expression patterns" value="Expressed in gamma Kenyon cell (Drosophila) in insect head and 235 other cell types or tissues"/>
</dbReference>
<dbReference type="ExpressionAtlas" id="P32870">
    <property type="expression patterns" value="baseline and differential"/>
</dbReference>
<dbReference type="GO" id="GO:0016020">
    <property type="term" value="C:membrane"/>
    <property type="evidence" value="ECO:0000314"/>
    <property type="project" value="FlyBase"/>
</dbReference>
<dbReference type="GO" id="GO:0005886">
    <property type="term" value="C:plasma membrane"/>
    <property type="evidence" value="ECO:0000318"/>
    <property type="project" value="GO_Central"/>
</dbReference>
<dbReference type="GO" id="GO:0045202">
    <property type="term" value="C:synapse"/>
    <property type="evidence" value="ECO:0007669"/>
    <property type="project" value="GOC"/>
</dbReference>
<dbReference type="GO" id="GO:0004016">
    <property type="term" value="F:adenylate cyclase activity"/>
    <property type="evidence" value="ECO:0000318"/>
    <property type="project" value="GO_Central"/>
</dbReference>
<dbReference type="GO" id="GO:0005524">
    <property type="term" value="F:ATP binding"/>
    <property type="evidence" value="ECO:0007669"/>
    <property type="project" value="UniProtKB-KW"/>
</dbReference>
<dbReference type="GO" id="GO:0008294">
    <property type="term" value="F:calcium- and calmodulin-responsive adenylate cyclase activity"/>
    <property type="evidence" value="ECO:0000314"/>
    <property type="project" value="FlyBase"/>
</dbReference>
<dbReference type="GO" id="GO:0005516">
    <property type="term" value="F:calmodulin binding"/>
    <property type="evidence" value="ECO:0007669"/>
    <property type="project" value="UniProtKB-KW"/>
</dbReference>
<dbReference type="GO" id="GO:0046872">
    <property type="term" value="F:metal ion binding"/>
    <property type="evidence" value="ECO:0007669"/>
    <property type="project" value="UniProtKB-KW"/>
</dbReference>
<dbReference type="GO" id="GO:0007189">
    <property type="term" value="P:adenylate cyclase-activating G protein-coupled receptor signaling pathway"/>
    <property type="evidence" value="ECO:0000315"/>
    <property type="project" value="FlyBase"/>
</dbReference>
<dbReference type="GO" id="GO:0007615">
    <property type="term" value="P:anesthesia-resistant memory"/>
    <property type="evidence" value="ECO:0000315"/>
    <property type="project" value="FlyBase"/>
</dbReference>
<dbReference type="GO" id="GO:0008306">
    <property type="term" value="P:associative learning"/>
    <property type="evidence" value="ECO:0000314"/>
    <property type="project" value="FlyBase"/>
</dbReference>
<dbReference type="GO" id="GO:0048675">
    <property type="term" value="P:axon extension"/>
    <property type="evidence" value="ECO:0000315"/>
    <property type="project" value="FlyBase"/>
</dbReference>
<dbReference type="GO" id="GO:0048149">
    <property type="term" value="P:behavioral response to ethanol"/>
    <property type="evidence" value="ECO:0000315"/>
    <property type="project" value="FlyBase"/>
</dbReference>
<dbReference type="GO" id="GO:0006171">
    <property type="term" value="P:cAMP biosynthetic process"/>
    <property type="evidence" value="ECO:0000318"/>
    <property type="project" value="GO_Central"/>
</dbReference>
<dbReference type="GO" id="GO:0007268">
    <property type="term" value="P:chemical synaptic transmission"/>
    <property type="evidence" value="ECO:0000315"/>
    <property type="project" value="FlyBase"/>
</dbReference>
<dbReference type="GO" id="GO:0007623">
    <property type="term" value="P:circadian rhythm"/>
    <property type="evidence" value="ECO:0000315"/>
    <property type="project" value="UniProtKB"/>
</dbReference>
<dbReference type="GO" id="GO:0001661">
    <property type="term" value="P:conditioned taste aversion"/>
    <property type="evidence" value="ECO:0000315"/>
    <property type="project" value="FlyBase"/>
</dbReference>
<dbReference type="GO" id="GO:0007619">
    <property type="term" value="P:courtship behavior"/>
    <property type="evidence" value="ECO:0000304"/>
    <property type="project" value="FlyBase"/>
</dbReference>
<dbReference type="GO" id="GO:0009190">
    <property type="term" value="P:cyclic nucleotide biosynthetic process"/>
    <property type="evidence" value="ECO:0000314"/>
    <property type="project" value="FlyBase"/>
</dbReference>
<dbReference type="GO" id="GO:0008340">
    <property type="term" value="P:determination of adult lifespan"/>
    <property type="evidence" value="ECO:0000315"/>
    <property type="project" value="FlyBase"/>
</dbReference>
<dbReference type="GO" id="GO:0035556">
    <property type="term" value="P:intracellular signal transduction"/>
    <property type="evidence" value="ECO:0007669"/>
    <property type="project" value="InterPro"/>
</dbReference>
<dbReference type="GO" id="GO:0007612">
    <property type="term" value="P:learning"/>
    <property type="evidence" value="ECO:0000315"/>
    <property type="project" value="FlyBase"/>
</dbReference>
<dbReference type="GO" id="GO:0007611">
    <property type="term" value="P:learning or memory"/>
    <property type="evidence" value="ECO:0000315"/>
    <property type="project" value="FlyBase"/>
</dbReference>
<dbReference type="GO" id="GO:0007617">
    <property type="term" value="P:mating behavior"/>
    <property type="evidence" value="ECO:0000304"/>
    <property type="project" value="FlyBase"/>
</dbReference>
<dbReference type="GO" id="GO:0072375">
    <property type="term" value="P:medium-term memory"/>
    <property type="evidence" value="ECO:0000315"/>
    <property type="project" value="FlyBase"/>
</dbReference>
<dbReference type="GO" id="GO:0007613">
    <property type="term" value="P:memory"/>
    <property type="evidence" value="ECO:0000315"/>
    <property type="project" value="FlyBase"/>
</dbReference>
<dbReference type="GO" id="GO:0007591">
    <property type="term" value="P:molting cycle, chitin-based cuticle"/>
    <property type="evidence" value="ECO:0000316"/>
    <property type="project" value="FlyBase"/>
</dbReference>
<dbReference type="GO" id="GO:0007528">
    <property type="term" value="P:neuromuscular junction development"/>
    <property type="evidence" value="ECO:0000315"/>
    <property type="project" value="FlyBase"/>
</dbReference>
<dbReference type="GO" id="GO:0007274">
    <property type="term" value="P:neuromuscular synaptic transmission"/>
    <property type="evidence" value="ECO:0000315"/>
    <property type="project" value="FlyBase"/>
</dbReference>
<dbReference type="GO" id="GO:0008355">
    <property type="term" value="P:olfactory learning"/>
    <property type="evidence" value="ECO:0000315"/>
    <property type="project" value="FlyBase"/>
</dbReference>
<dbReference type="GO" id="GO:0090328">
    <property type="term" value="P:regulation of olfactory learning"/>
    <property type="evidence" value="ECO:0000315"/>
    <property type="project" value="FlyBase"/>
</dbReference>
<dbReference type="GO" id="GO:0009408">
    <property type="term" value="P:response to heat"/>
    <property type="evidence" value="ECO:0000315"/>
    <property type="project" value="FlyBase"/>
</dbReference>
<dbReference type="GO" id="GO:0006979">
    <property type="term" value="P:response to oxidative stress"/>
    <property type="evidence" value="ECO:0000315"/>
    <property type="project" value="FlyBase"/>
</dbReference>
<dbReference type="GO" id="GO:0007614">
    <property type="term" value="P:short-term memory"/>
    <property type="evidence" value="ECO:0000315"/>
    <property type="project" value="FlyBase"/>
</dbReference>
<dbReference type="GO" id="GO:0030431">
    <property type="term" value="P:sleep"/>
    <property type="evidence" value="ECO:0000315"/>
    <property type="project" value="FlyBase"/>
</dbReference>
<dbReference type="CDD" id="cd07302">
    <property type="entry name" value="CHD"/>
    <property type="match status" value="2"/>
</dbReference>
<dbReference type="FunFam" id="3.30.70.1230:FF:000001">
    <property type="entry name" value="Adenylate cyclase"/>
    <property type="match status" value="1"/>
</dbReference>
<dbReference type="FunFam" id="3.30.70.1230:FF:000002">
    <property type="entry name" value="Adenylate cyclase"/>
    <property type="match status" value="1"/>
</dbReference>
<dbReference type="Gene3D" id="3.30.70.1230">
    <property type="entry name" value="Nucleotide cyclase"/>
    <property type="match status" value="2"/>
</dbReference>
<dbReference type="InterPro" id="IPR001054">
    <property type="entry name" value="A/G_cyclase"/>
</dbReference>
<dbReference type="InterPro" id="IPR018297">
    <property type="entry name" value="A/G_cyclase_CS"/>
</dbReference>
<dbReference type="InterPro" id="IPR032628">
    <property type="entry name" value="AC_N"/>
</dbReference>
<dbReference type="InterPro" id="IPR009398">
    <property type="entry name" value="Adcy_conserved_dom"/>
</dbReference>
<dbReference type="InterPro" id="IPR029787">
    <property type="entry name" value="Nucleotide_cyclase"/>
</dbReference>
<dbReference type="PANTHER" id="PTHR45627">
    <property type="entry name" value="ADENYLATE CYCLASE TYPE 1"/>
    <property type="match status" value="1"/>
</dbReference>
<dbReference type="PANTHER" id="PTHR45627:SF26">
    <property type="entry name" value="ADENYLATE CYCLASE TYPE 1"/>
    <property type="match status" value="1"/>
</dbReference>
<dbReference type="Pfam" id="PF16214">
    <property type="entry name" value="AC_N"/>
    <property type="match status" value="1"/>
</dbReference>
<dbReference type="Pfam" id="PF06327">
    <property type="entry name" value="Adcy_cons_dom"/>
    <property type="match status" value="1"/>
</dbReference>
<dbReference type="Pfam" id="PF00211">
    <property type="entry name" value="Guanylate_cyc"/>
    <property type="match status" value="2"/>
</dbReference>
<dbReference type="SMART" id="SM00044">
    <property type="entry name" value="CYCc"/>
    <property type="match status" value="2"/>
</dbReference>
<dbReference type="SUPFAM" id="SSF55073">
    <property type="entry name" value="Nucleotide cyclase"/>
    <property type="match status" value="2"/>
</dbReference>
<dbReference type="PROSITE" id="PS00452">
    <property type="entry name" value="GUANYLATE_CYCLASE_1"/>
    <property type="match status" value="2"/>
</dbReference>
<dbReference type="PROSITE" id="PS50125">
    <property type="entry name" value="GUANYLATE_CYCLASE_2"/>
    <property type="match status" value="2"/>
</dbReference>
<gene>
    <name evidence="7" type="primary">Adcy1</name>
    <name evidence="7" type="synonym">rut</name>
    <name evidence="7" type="ORF">CG9533</name>
</gene>
<reference key="1">
    <citation type="journal article" date="1992" name="Cell">
        <title>The Drosophila learning and memory gene rutabaga encodes a Ca2+/Calmodulin-responsive adenylyl cyclase.</title>
        <authorList>
            <person name="Levin L.R."/>
            <person name="Han P.-L."/>
            <person name="Hwang P.M."/>
            <person name="Feinstein P.G."/>
            <person name="Davis R.L."/>
            <person name="Reed R.R."/>
        </authorList>
    </citation>
    <scope>NUCLEOTIDE SEQUENCE [MRNA]</scope>
    <scope>FUNCTION</scope>
    <scope>CATALYTIC ACTIVITY</scope>
    <scope>MUTAGENESIS OF GLY-1026</scope>
    <source>
        <strain>Canton-S</strain>
        <tissue>Head</tissue>
    </source>
</reference>
<reference key="2">
    <citation type="journal article" date="2000" name="Science">
        <title>The genome sequence of Drosophila melanogaster.</title>
        <authorList>
            <person name="Adams M.D."/>
            <person name="Celniker S.E."/>
            <person name="Holt R.A."/>
            <person name="Evans C.A."/>
            <person name="Gocayne J.D."/>
            <person name="Amanatides P.G."/>
            <person name="Scherer S.E."/>
            <person name="Li P.W."/>
            <person name="Hoskins R.A."/>
            <person name="Galle R.F."/>
            <person name="George R.A."/>
            <person name="Lewis S.E."/>
            <person name="Richards S."/>
            <person name="Ashburner M."/>
            <person name="Henderson S.N."/>
            <person name="Sutton G.G."/>
            <person name="Wortman J.R."/>
            <person name="Yandell M.D."/>
            <person name="Zhang Q."/>
            <person name="Chen L.X."/>
            <person name="Brandon R.C."/>
            <person name="Rogers Y.-H.C."/>
            <person name="Blazej R.G."/>
            <person name="Champe M."/>
            <person name="Pfeiffer B.D."/>
            <person name="Wan K.H."/>
            <person name="Doyle C."/>
            <person name="Baxter E.G."/>
            <person name="Helt G."/>
            <person name="Nelson C.R."/>
            <person name="Miklos G.L.G."/>
            <person name="Abril J.F."/>
            <person name="Agbayani A."/>
            <person name="An H.-J."/>
            <person name="Andrews-Pfannkoch C."/>
            <person name="Baldwin D."/>
            <person name="Ballew R.M."/>
            <person name="Basu A."/>
            <person name="Baxendale J."/>
            <person name="Bayraktaroglu L."/>
            <person name="Beasley E.M."/>
            <person name="Beeson K.Y."/>
            <person name="Benos P.V."/>
            <person name="Berman B.P."/>
            <person name="Bhandari D."/>
            <person name="Bolshakov S."/>
            <person name="Borkova D."/>
            <person name="Botchan M.R."/>
            <person name="Bouck J."/>
            <person name="Brokstein P."/>
            <person name="Brottier P."/>
            <person name="Burtis K.C."/>
            <person name="Busam D.A."/>
            <person name="Butler H."/>
            <person name="Cadieu E."/>
            <person name="Center A."/>
            <person name="Chandra I."/>
            <person name="Cherry J.M."/>
            <person name="Cawley S."/>
            <person name="Dahlke C."/>
            <person name="Davenport L.B."/>
            <person name="Davies P."/>
            <person name="de Pablos B."/>
            <person name="Delcher A."/>
            <person name="Deng Z."/>
            <person name="Mays A.D."/>
            <person name="Dew I."/>
            <person name="Dietz S.M."/>
            <person name="Dodson K."/>
            <person name="Doup L.E."/>
            <person name="Downes M."/>
            <person name="Dugan-Rocha S."/>
            <person name="Dunkov B.C."/>
            <person name="Dunn P."/>
            <person name="Durbin K.J."/>
            <person name="Evangelista C.C."/>
            <person name="Ferraz C."/>
            <person name="Ferriera S."/>
            <person name="Fleischmann W."/>
            <person name="Fosler C."/>
            <person name="Gabrielian A.E."/>
            <person name="Garg N.S."/>
            <person name="Gelbart W.M."/>
            <person name="Glasser K."/>
            <person name="Glodek A."/>
            <person name="Gong F."/>
            <person name="Gorrell J.H."/>
            <person name="Gu Z."/>
            <person name="Guan P."/>
            <person name="Harris M."/>
            <person name="Harris N.L."/>
            <person name="Harvey D.A."/>
            <person name="Heiman T.J."/>
            <person name="Hernandez J.R."/>
            <person name="Houck J."/>
            <person name="Hostin D."/>
            <person name="Houston K.A."/>
            <person name="Howland T.J."/>
            <person name="Wei M.-H."/>
            <person name="Ibegwam C."/>
            <person name="Jalali M."/>
            <person name="Kalush F."/>
            <person name="Karpen G.H."/>
            <person name="Ke Z."/>
            <person name="Kennison J.A."/>
            <person name="Ketchum K.A."/>
            <person name="Kimmel B.E."/>
            <person name="Kodira C.D."/>
            <person name="Kraft C.L."/>
            <person name="Kravitz S."/>
            <person name="Kulp D."/>
            <person name="Lai Z."/>
            <person name="Lasko P."/>
            <person name="Lei Y."/>
            <person name="Levitsky A.A."/>
            <person name="Li J.H."/>
            <person name="Li Z."/>
            <person name="Liang Y."/>
            <person name="Lin X."/>
            <person name="Liu X."/>
            <person name="Mattei B."/>
            <person name="McIntosh T.C."/>
            <person name="McLeod M.P."/>
            <person name="McPherson D."/>
            <person name="Merkulov G."/>
            <person name="Milshina N.V."/>
            <person name="Mobarry C."/>
            <person name="Morris J."/>
            <person name="Moshrefi A."/>
            <person name="Mount S.M."/>
            <person name="Moy M."/>
            <person name="Murphy B."/>
            <person name="Murphy L."/>
            <person name="Muzny D.M."/>
            <person name="Nelson D.L."/>
            <person name="Nelson D.R."/>
            <person name="Nelson K.A."/>
            <person name="Nixon K."/>
            <person name="Nusskern D.R."/>
            <person name="Pacleb J.M."/>
            <person name="Palazzolo M."/>
            <person name="Pittman G.S."/>
            <person name="Pan S."/>
            <person name="Pollard J."/>
            <person name="Puri V."/>
            <person name="Reese M.G."/>
            <person name="Reinert K."/>
            <person name="Remington K."/>
            <person name="Saunders R.D.C."/>
            <person name="Scheeler F."/>
            <person name="Shen H."/>
            <person name="Shue B.C."/>
            <person name="Siden-Kiamos I."/>
            <person name="Simpson M."/>
            <person name="Skupski M.P."/>
            <person name="Smith T.J."/>
            <person name="Spier E."/>
            <person name="Spradling A.C."/>
            <person name="Stapleton M."/>
            <person name="Strong R."/>
            <person name="Sun E."/>
            <person name="Svirskas R."/>
            <person name="Tector C."/>
            <person name="Turner R."/>
            <person name="Venter E."/>
            <person name="Wang A.H."/>
            <person name="Wang X."/>
            <person name="Wang Z.-Y."/>
            <person name="Wassarman D.A."/>
            <person name="Weinstock G.M."/>
            <person name="Weissenbach J."/>
            <person name="Williams S.M."/>
            <person name="Woodage T."/>
            <person name="Worley K.C."/>
            <person name="Wu D."/>
            <person name="Yang S."/>
            <person name="Yao Q.A."/>
            <person name="Ye J."/>
            <person name="Yeh R.-F."/>
            <person name="Zaveri J.S."/>
            <person name="Zhan M."/>
            <person name="Zhang G."/>
            <person name="Zhao Q."/>
            <person name="Zheng L."/>
            <person name="Zheng X.H."/>
            <person name="Zhong F.N."/>
            <person name="Zhong W."/>
            <person name="Zhou X."/>
            <person name="Zhu S.C."/>
            <person name="Zhu X."/>
            <person name="Smith H.O."/>
            <person name="Gibbs R.A."/>
            <person name="Myers E.W."/>
            <person name="Rubin G.M."/>
            <person name="Venter J.C."/>
        </authorList>
    </citation>
    <scope>NUCLEOTIDE SEQUENCE [LARGE SCALE GENOMIC DNA]</scope>
    <source>
        <strain>Berkeley</strain>
    </source>
</reference>
<reference key="3">
    <citation type="journal article" date="2002" name="Genome Biol.">
        <title>Annotation of the Drosophila melanogaster euchromatic genome: a systematic review.</title>
        <authorList>
            <person name="Misra S."/>
            <person name="Crosby M.A."/>
            <person name="Mungall C.J."/>
            <person name="Matthews B.B."/>
            <person name="Campbell K.S."/>
            <person name="Hradecky P."/>
            <person name="Huang Y."/>
            <person name="Kaminker J.S."/>
            <person name="Millburn G.H."/>
            <person name="Prochnik S.E."/>
            <person name="Smith C.D."/>
            <person name="Tupy J.L."/>
            <person name="Whitfield E.J."/>
            <person name="Bayraktaroglu L."/>
            <person name="Berman B.P."/>
            <person name="Bettencourt B.R."/>
            <person name="Celniker S.E."/>
            <person name="de Grey A.D.N.J."/>
            <person name="Drysdale R.A."/>
            <person name="Harris N.L."/>
            <person name="Richter J."/>
            <person name="Russo S."/>
            <person name="Schroeder A.J."/>
            <person name="Shu S.Q."/>
            <person name="Stapleton M."/>
            <person name="Yamada C."/>
            <person name="Ashburner M."/>
            <person name="Gelbart W.M."/>
            <person name="Rubin G.M."/>
            <person name="Lewis S.E."/>
        </authorList>
    </citation>
    <scope>GENOME REANNOTATION</scope>
    <source>
        <strain>Berkeley</strain>
    </source>
</reference>